<organism>
    <name type="scientific">Bacillus anthracis (strain A0248)</name>
    <dbReference type="NCBI Taxonomy" id="592021"/>
    <lineage>
        <taxon>Bacteria</taxon>
        <taxon>Bacillati</taxon>
        <taxon>Bacillota</taxon>
        <taxon>Bacilli</taxon>
        <taxon>Bacillales</taxon>
        <taxon>Bacillaceae</taxon>
        <taxon>Bacillus</taxon>
        <taxon>Bacillus cereus group</taxon>
    </lineage>
</organism>
<sequence length="289" mass="32281">MLRDLFVKKKKYAAIPSEQVRKDVPDGVMTKCPKCKKIMYTKEVLKNLKVCVNCGYHHPMNAWERLDSILDEGSFREYDKEMVSLNPLEFPNYEEKLESDRKKTELNEAVVTGEGTIDDMLVVVAVMDSRFRMGSMGSVVGEKIARAVEKAYDLQVPFIIFTASGGARMQEGILSLMQMAKTSVALKKHSNAGGLFISVMTHPTTGGVSASFASLGDYNLAEPGALIGFAGRRVIEQTVREKLPEDFQTAEFLLEHGQLDAVVHRDDMRESLRKILEVHQGGEMAVWQS</sequence>
<dbReference type="EC" id="2.1.3.15" evidence="1"/>
<dbReference type="EMBL" id="CP001598">
    <property type="protein sequence ID" value="ACQ49672.1"/>
    <property type="molecule type" value="Genomic_DNA"/>
</dbReference>
<dbReference type="RefSeq" id="WP_000942874.1">
    <property type="nucleotide sequence ID" value="NC_012659.1"/>
</dbReference>
<dbReference type="SMR" id="C3PAJ0"/>
<dbReference type="GeneID" id="45024472"/>
<dbReference type="KEGG" id="bai:BAA_4857"/>
<dbReference type="HOGENOM" id="CLU_015486_1_1_9"/>
<dbReference type="UniPathway" id="UPA00655">
    <property type="reaction ID" value="UER00711"/>
</dbReference>
<dbReference type="GO" id="GO:0009317">
    <property type="term" value="C:acetyl-CoA carboxylase complex"/>
    <property type="evidence" value="ECO:0007669"/>
    <property type="project" value="InterPro"/>
</dbReference>
<dbReference type="GO" id="GO:0003989">
    <property type="term" value="F:acetyl-CoA carboxylase activity"/>
    <property type="evidence" value="ECO:0007669"/>
    <property type="project" value="InterPro"/>
</dbReference>
<dbReference type="GO" id="GO:0005524">
    <property type="term" value="F:ATP binding"/>
    <property type="evidence" value="ECO:0007669"/>
    <property type="project" value="UniProtKB-KW"/>
</dbReference>
<dbReference type="GO" id="GO:0016743">
    <property type="term" value="F:carboxyl- or carbamoyltransferase activity"/>
    <property type="evidence" value="ECO:0007669"/>
    <property type="project" value="UniProtKB-UniRule"/>
</dbReference>
<dbReference type="GO" id="GO:0008270">
    <property type="term" value="F:zinc ion binding"/>
    <property type="evidence" value="ECO:0007669"/>
    <property type="project" value="UniProtKB-UniRule"/>
</dbReference>
<dbReference type="GO" id="GO:0006633">
    <property type="term" value="P:fatty acid biosynthetic process"/>
    <property type="evidence" value="ECO:0007669"/>
    <property type="project" value="UniProtKB-KW"/>
</dbReference>
<dbReference type="GO" id="GO:2001295">
    <property type="term" value="P:malonyl-CoA biosynthetic process"/>
    <property type="evidence" value="ECO:0007669"/>
    <property type="project" value="UniProtKB-UniRule"/>
</dbReference>
<dbReference type="Gene3D" id="3.90.226.10">
    <property type="entry name" value="2-enoyl-CoA Hydratase, Chain A, domain 1"/>
    <property type="match status" value="1"/>
</dbReference>
<dbReference type="HAMAP" id="MF_01395">
    <property type="entry name" value="AcetylCoA_CT_beta"/>
    <property type="match status" value="1"/>
</dbReference>
<dbReference type="InterPro" id="IPR034733">
    <property type="entry name" value="AcCoA_carboxyl_beta"/>
</dbReference>
<dbReference type="InterPro" id="IPR000438">
    <property type="entry name" value="Acetyl_CoA_COase_Trfase_b_su"/>
</dbReference>
<dbReference type="InterPro" id="IPR029045">
    <property type="entry name" value="ClpP/crotonase-like_dom_sf"/>
</dbReference>
<dbReference type="InterPro" id="IPR011762">
    <property type="entry name" value="COA_CT_N"/>
</dbReference>
<dbReference type="InterPro" id="IPR041010">
    <property type="entry name" value="Znf-ACC"/>
</dbReference>
<dbReference type="NCBIfam" id="TIGR00515">
    <property type="entry name" value="accD"/>
    <property type="match status" value="1"/>
</dbReference>
<dbReference type="PANTHER" id="PTHR42995">
    <property type="entry name" value="ACETYL-COENZYME A CARBOXYLASE CARBOXYL TRANSFERASE SUBUNIT BETA, CHLOROPLASTIC"/>
    <property type="match status" value="1"/>
</dbReference>
<dbReference type="PANTHER" id="PTHR42995:SF5">
    <property type="entry name" value="ACETYL-COENZYME A CARBOXYLASE CARBOXYL TRANSFERASE SUBUNIT BETA, CHLOROPLASTIC"/>
    <property type="match status" value="1"/>
</dbReference>
<dbReference type="Pfam" id="PF01039">
    <property type="entry name" value="Carboxyl_trans"/>
    <property type="match status" value="1"/>
</dbReference>
<dbReference type="Pfam" id="PF17848">
    <property type="entry name" value="Zn_ribbon_ACC"/>
    <property type="match status" value="1"/>
</dbReference>
<dbReference type="PRINTS" id="PR01070">
    <property type="entry name" value="ACCCTRFRASEB"/>
</dbReference>
<dbReference type="SUPFAM" id="SSF52096">
    <property type="entry name" value="ClpP/crotonase"/>
    <property type="match status" value="1"/>
</dbReference>
<dbReference type="PROSITE" id="PS50980">
    <property type="entry name" value="COA_CT_NTER"/>
    <property type="match status" value="1"/>
</dbReference>
<comment type="function">
    <text evidence="1">Component of the acetyl coenzyme A carboxylase (ACC) complex. Biotin carboxylase (BC) catalyzes the carboxylation of biotin on its carrier protein (BCCP) and then the CO(2) group is transferred by the transcarboxylase to acetyl-CoA to form malonyl-CoA.</text>
</comment>
<comment type="catalytic activity">
    <reaction evidence="1">
        <text>N(6)-carboxybiotinyl-L-lysyl-[protein] + acetyl-CoA = N(6)-biotinyl-L-lysyl-[protein] + malonyl-CoA</text>
        <dbReference type="Rhea" id="RHEA:54728"/>
        <dbReference type="Rhea" id="RHEA-COMP:10505"/>
        <dbReference type="Rhea" id="RHEA-COMP:10506"/>
        <dbReference type="ChEBI" id="CHEBI:57288"/>
        <dbReference type="ChEBI" id="CHEBI:57384"/>
        <dbReference type="ChEBI" id="CHEBI:83144"/>
        <dbReference type="ChEBI" id="CHEBI:83145"/>
        <dbReference type="EC" id="2.1.3.15"/>
    </reaction>
</comment>
<comment type="cofactor">
    <cofactor evidence="1">
        <name>Zn(2+)</name>
        <dbReference type="ChEBI" id="CHEBI:29105"/>
    </cofactor>
    <text evidence="1">Binds 1 zinc ion per subunit.</text>
</comment>
<comment type="pathway">
    <text evidence="1">Lipid metabolism; malonyl-CoA biosynthesis; malonyl-CoA from acetyl-CoA: step 1/1.</text>
</comment>
<comment type="subunit">
    <text evidence="1">Acetyl-CoA carboxylase is a heterohexamer composed of biotin carboxyl carrier protein (AccB), biotin carboxylase (AccC) and two subunits each of ACCase subunit alpha (AccA) and ACCase subunit beta (AccD).</text>
</comment>
<comment type="subcellular location">
    <subcellularLocation>
        <location evidence="1">Cytoplasm</location>
    </subcellularLocation>
</comment>
<comment type="similarity">
    <text evidence="1">Belongs to the AccD/PCCB family.</text>
</comment>
<keyword id="KW-0067">ATP-binding</keyword>
<keyword id="KW-0963">Cytoplasm</keyword>
<keyword id="KW-0275">Fatty acid biosynthesis</keyword>
<keyword id="KW-0276">Fatty acid metabolism</keyword>
<keyword id="KW-0444">Lipid biosynthesis</keyword>
<keyword id="KW-0443">Lipid metabolism</keyword>
<keyword id="KW-0479">Metal-binding</keyword>
<keyword id="KW-0547">Nucleotide-binding</keyword>
<keyword id="KW-0808">Transferase</keyword>
<keyword id="KW-0862">Zinc</keyword>
<keyword id="KW-0863">Zinc-finger</keyword>
<reference key="1">
    <citation type="submission" date="2009-04" db="EMBL/GenBank/DDBJ databases">
        <title>Genome sequence of Bacillus anthracis A0248.</title>
        <authorList>
            <person name="Dodson R.J."/>
            <person name="Munk A.C."/>
            <person name="Bruce D."/>
            <person name="Detter C."/>
            <person name="Tapia R."/>
            <person name="Sutton G."/>
            <person name="Sims D."/>
            <person name="Brettin T."/>
        </authorList>
    </citation>
    <scope>NUCLEOTIDE SEQUENCE [LARGE SCALE GENOMIC DNA]</scope>
    <source>
        <strain>A0248</strain>
    </source>
</reference>
<protein>
    <recommendedName>
        <fullName evidence="1">Acetyl-coenzyme A carboxylase carboxyl transferase subunit beta</fullName>
        <shortName evidence="1">ACCase subunit beta</shortName>
        <shortName evidence="1">Acetyl-CoA carboxylase carboxyltransferase subunit beta</shortName>
        <ecNumber evidence="1">2.1.3.15</ecNumber>
    </recommendedName>
</protein>
<evidence type="ECO:0000255" key="1">
    <source>
        <dbReference type="HAMAP-Rule" id="MF_01395"/>
    </source>
</evidence>
<evidence type="ECO:0000255" key="2">
    <source>
        <dbReference type="PROSITE-ProRule" id="PRU01136"/>
    </source>
</evidence>
<name>ACCD_BACAA</name>
<feature type="chain" id="PRO_0000389670" description="Acetyl-coenzyme A carboxylase carboxyl transferase subunit beta">
    <location>
        <begin position="1"/>
        <end position="289"/>
    </location>
</feature>
<feature type="domain" description="CoA carboxyltransferase N-terminal" evidence="2">
    <location>
        <begin position="28"/>
        <end position="289"/>
    </location>
</feature>
<feature type="zinc finger region" description="C4-type" evidence="1">
    <location>
        <begin position="32"/>
        <end position="54"/>
    </location>
</feature>
<feature type="binding site" evidence="1">
    <location>
        <position position="32"/>
    </location>
    <ligand>
        <name>Zn(2+)</name>
        <dbReference type="ChEBI" id="CHEBI:29105"/>
    </ligand>
</feature>
<feature type="binding site" evidence="1">
    <location>
        <position position="35"/>
    </location>
    <ligand>
        <name>Zn(2+)</name>
        <dbReference type="ChEBI" id="CHEBI:29105"/>
    </ligand>
</feature>
<feature type="binding site" evidence="1">
    <location>
        <position position="51"/>
    </location>
    <ligand>
        <name>Zn(2+)</name>
        <dbReference type="ChEBI" id="CHEBI:29105"/>
    </ligand>
</feature>
<feature type="binding site" evidence="1">
    <location>
        <position position="54"/>
    </location>
    <ligand>
        <name>Zn(2+)</name>
        <dbReference type="ChEBI" id="CHEBI:29105"/>
    </ligand>
</feature>
<proteinExistence type="inferred from homology"/>
<accession>C3PAJ0</accession>
<gene>
    <name evidence="1" type="primary">accD</name>
    <name type="ordered locus">BAA_4857</name>
</gene>